<keyword id="KW-0002">3D-structure</keyword>
<keyword id="KW-0597">Phosphoprotein</keyword>
<keyword id="KW-1267">Proteomics identification</keyword>
<keyword id="KW-1185">Reference proteome</keyword>
<keyword id="KW-0677">Repeat</keyword>
<keyword id="KW-0727">SH2 domain</keyword>
<keyword id="KW-0728">SH3 domain</keyword>
<name>CRKL_HUMAN</name>
<sequence length="303" mass="33777">MSSARFDSSDRSAWYMGPVSRQEAQTRLQGQRHGMFLVRDSSTCPGDYVLSVSENSRVSHYIINSLPNRRFKIGDQEFDHLPALLEFYKIHYLDTTTLIEPAPRYPSPPMGSVSAPNLPTAEDNLEYVRTLYDFPGNDAEDLPFKKGEILVIIEKPEEQWWSARNKDGRVGMIPVPYVEKLVRSSPHGKHGNRNSNSYGIPEPAHAYAQPQTTTPLPAVSGSPGAAITPLPSTQNGPVFAKAIQKRVPCAYDKTALALEVGDIVKVTRMNINGQWEGEVNGRKGLFPFTHVKIFDPQNPDENE</sequence>
<protein>
    <recommendedName>
        <fullName>Crk-like protein</fullName>
    </recommendedName>
</protein>
<proteinExistence type="evidence at protein level"/>
<dbReference type="EMBL" id="X59656">
    <property type="protein sequence ID" value="CAA42199.1"/>
    <property type="molecule type" value="mRNA"/>
</dbReference>
<dbReference type="EMBL" id="CR456423">
    <property type="protein sequence ID" value="CAG30309.1"/>
    <property type="molecule type" value="mRNA"/>
</dbReference>
<dbReference type="EMBL" id="AK292909">
    <property type="protein sequence ID" value="BAF85598.1"/>
    <property type="molecule type" value="mRNA"/>
</dbReference>
<dbReference type="EMBL" id="CH471176">
    <property type="protein sequence ID" value="EAX02932.1"/>
    <property type="molecule type" value="Genomic_DNA"/>
</dbReference>
<dbReference type="EMBL" id="CH471176">
    <property type="protein sequence ID" value="EAX02933.1"/>
    <property type="molecule type" value="Genomic_DNA"/>
</dbReference>
<dbReference type="EMBL" id="CH471176">
    <property type="protein sequence ID" value="EAX02934.1"/>
    <property type="molecule type" value="Genomic_DNA"/>
</dbReference>
<dbReference type="EMBL" id="BC043500">
    <property type="protein sequence ID" value="AAH43500.1"/>
    <property type="molecule type" value="mRNA"/>
</dbReference>
<dbReference type="CCDS" id="CCDS13785.1"/>
<dbReference type="PIR" id="S41754">
    <property type="entry name" value="S41754"/>
</dbReference>
<dbReference type="RefSeq" id="NP_005198.1">
    <property type="nucleotide sequence ID" value="NM_005207.4"/>
</dbReference>
<dbReference type="PDB" id="2BZX">
    <property type="method" value="X-ray"/>
    <property type="resolution" value="2.80 A"/>
    <property type="chains" value="A=237-303"/>
</dbReference>
<dbReference type="PDB" id="2BZY">
    <property type="method" value="X-ray"/>
    <property type="resolution" value="2.50 A"/>
    <property type="chains" value="A/B=237-303"/>
</dbReference>
<dbReference type="PDB" id="2DBK">
    <property type="method" value="NMR"/>
    <property type="chains" value="A=229-303"/>
</dbReference>
<dbReference type="PDB" id="2EO3">
    <property type="method" value="NMR"/>
    <property type="chains" value="A=1-104"/>
</dbReference>
<dbReference type="PDB" id="2LQN">
    <property type="method" value="NMR"/>
    <property type="chains" value="A=1-303"/>
</dbReference>
<dbReference type="PDB" id="2LQW">
    <property type="method" value="NMR"/>
    <property type="chains" value="A=1-303"/>
</dbReference>
<dbReference type="PDBsum" id="2BZX"/>
<dbReference type="PDBsum" id="2BZY"/>
<dbReference type="PDBsum" id="2DBK"/>
<dbReference type="PDBsum" id="2EO3"/>
<dbReference type="PDBsum" id="2LQN"/>
<dbReference type="PDBsum" id="2LQW"/>
<dbReference type="BMRB" id="P46109"/>
<dbReference type="SMR" id="P46109"/>
<dbReference type="BioGRID" id="107789">
    <property type="interactions" value="224"/>
</dbReference>
<dbReference type="CORUM" id="P46109"/>
<dbReference type="DIP" id="DIP-29165N"/>
<dbReference type="FunCoup" id="P46109">
    <property type="interactions" value="5063"/>
</dbReference>
<dbReference type="IntAct" id="P46109">
    <property type="interactions" value="155"/>
</dbReference>
<dbReference type="MINT" id="P46109"/>
<dbReference type="STRING" id="9606.ENSP00000346300"/>
<dbReference type="ChEMBL" id="CHEMBL5291558"/>
<dbReference type="GlyGen" id="P46109">
    <property type="glycosylation" value="1 site, 1 O-linked glycan (1 site)"/>
</dbReference>
<dbReference type="iPTMnet" id="P46109"/>
<dbReference type="MetOSite" id="P46109"/>
<dbReference type="PhosphoSitePlus" id="P46109"/>
<dbReference type="SwissPalm" id="P46109"/>
<dbReference type="BioMuta" id="CRKL"/>
<dbReference type="DMDM" id="1169094"/>
<dbReference type="OGP" id="P46109"/>
<dbReference type="jPOST" id="P46109"/>
<dbReference type="MassIVE" id="P46109"/>
<dbReference type="PaxDb" id="9606-ENSP00000346300"/>
<dbReference type="PeptideAtlas" id="P46109"/>
<dbReference type="ProteomicsDB" id="55734"/>
<dbReference type="Pumba" id="P46109"/>
<dbReference type="Antibodypedia" id="255">
    <property type="antibodies" value="731 antibodies from 39 providers"/>
</dbReference>
<dbReference type="DNASU" id="1399"/>
<dbReference type="Ensembl" id="ENST00000354336.8">
    <property type="protein sequence ID" value="ENSP00000346300.3"/>
    <property type="gene ID" value="ENSG00000099942.13"/>
</dbReference>
<dbReference type="Ensembl" id="ENST00000411769.1">
    <property type="protein sequence ID" value="ENSP00000396646.1"/>
    <property type="gene ID" value="ENSG00000099942.13"/>
</dbReference>
<dbReference type="GeneID" id="1399"/>
<dbReference type="KEGG" id="hsa:1399"/>
<dbReference type="MANE-Select" id="ENST00000354336.8">
    <property type="protein sequence ID" value="ENSP00000346300.3"/>
    <property type="RefSeq nucleotide sequence ID" value="NM_005207.4"/>
    <property type="RefSeq protein sequence ID" value="NP_005198.1"/>
</dbReference>
<dbReference type="UCSC" id="uc002ztf.2">
    <property type="organism name" value="human"/>
</dbReference>
<dbReference type="AGR" id="HGNC:2363"/>
<dbReference type="CTD" id="1399"/>
<dbReference type="DisGeNET" id="1399"/>
<dbReference type="GeneCards" id="CRKL"/>
<dbReference type="HGNC" id="HGNC:2363">
    <property type="gene designation" value="CRKL"/>
</dbReference>
<dbReference type="HPA" id="ENSG00000099942">
    <property type="expression patterns" value="Low tissue specificity"/>
</dbReference>
<dbReference type="MalaCards" id="CRKL"/>
<dbReference type="MIM" id="602007">
    <property type="type" value="gene"/>
</dbReference>
<dbReference type="neXtProt" id="NX_P46109"/>
<dbReference type="OpenTargets" id="ENSG00000099942"/>
<dbReference type="Orphanet" id="261330">
    <property type="disease" value="Distal 22q11.2 microdeletion syndrome"/>
</dbReference>
<dbReference type="PharmGKB" id="PA26881"/>
<dbReference type="VEuPathDB" id="HostDB:ENSG00000099942"/>
<dbReference type="eggNOG" id="KOG4792">
    <property type="taxonomic scope" value="Eukaryota"/>
</dbReference>
<dbReference type="GeneTree" id="ENSGT00820000127055"/>
<dbReference type="HOGENOM" id="CLU_060542_0_1_1"/>
<dbReference type="InParanoid" id="P46109"/>
<dbReference type="OMA" id="WYVGPLS"/>
<dbReference type="OrthoDB" id="9204160at2759"/>
<dbReference type="PAN-GO" id="P46109">
    <property type="GO annotations" value="5 GO annotations based on evolutionary models"/>
</dbReference>
<dbReference type="PhylomeDB" id="P46109"/>
<dbReference type="TreeFam" id="TF321436"/>
<dbReference type="PathwayCommons" id="P46109"/>
<dbReference type="Reactome" id="R-HSA-170968">
    <property type="pathway name" value="Frs2-mediated activation"/>
</dbReference>
<dbReference type="Reactome" id="R-HSA-186763">
    <property type="pathway name" value="Downstream signal transduction"/>
</dbReference>
<dbReference type="Reactome" id="R-HSA-8875555">
    <property type="pathway name" value="MET activates RAP1 and RAC1"/>
</dbReference>
<dbReference type="Reactome" id="R-HSA-8875656">
    <property type="pathway name" value="MET receptor recycling"/>
</dbReference>
<dbReference type="Reactome" id="R-HSA-9027284">
    <property type="pathway name" value="Erythropoietin activates RAS"/>
</dbReference>
<dbReference type="Reactome" id="R-HSA-912631">
    <property type="pathway name" value="Regulation of signaling by CBL"/>
</dbReference>
<dbReference type="SignaLink" id="P46109"/>
<dbReference type="SIGNOR" id="P46109"/>
<dbReference type="BioGRID-ORCS" id="1399">
    <property type="hits" value="588 hits in 1169 CRISPR screens"/>
</dbReference>
<dbReference type="CD-CODE" id="DEE660B4">
    <property type="entry name" value="Stress granule"/>
</dbReference>
<dbReference type="CD-CODE" id="FB4E32DD">
    <property type="entry name" value="Presynaptic clusters and postsynaptic densities"/>
</dbReference>
<dbReference type="ChiTaRS" id="CRKL">
    <property type="organism name" value="human"/>
</dbReference>
<dbReference type="EvolutionaryTrace" id="P46109"/>
<dbReference type="GeneWiki" id="CRKL"/>
<dbReference type="GenomeRNAi" id="1399"/>
<dbReference type="Pharos" id="P46109">
    <property type="development level" value="Tbio"/>
</dbReference>
<dbReference type="PRO" id="PR:P46109"/>
<dbReference type="Proteomes" id="UP000005640">
    <property type="component" value="Chromosome 22"/>
</dbReference>
<dbReference type="RNAct" id="P46109">
    <property type="molecule type" value="protein"/>
</dbReference>
<dbReference type="Bgee" id="ENSG00000099942">
    <property type="expression patterns" value="Expressed in secondary oocyte and 209 other cell types or tissues"/>
</dbReference>
<dbReference type="GO" id="GO:0005737">
    <property type="term" value="C:cytoplasm"/>
    <property type="evidence" value="ECO:0000318"/>
    <property type="project" value="GO_Central"/>
</dbReference>
<dbReference type="GO" id="GO:0005829">
    <property type="term" value="C:cytosol"/>
    <property type="evidence" value="ECO:0000314"/>
    <property type="project" value="HPA"/>
</dbReference>
<dbReference type="GO" id="GO:0098890">
    <property type="term" value="C:extrinsic component of postsynaptic membrane"/>
    <property type="evidence" value="ECO:0007669"/>
    <property type="project" value="Ensembl"/>
</dbReference>
<dbReference type="GO" id="GO:0031594">
    <property type="term" value="C:neuromuscular junction"/>
    <property type="evidence" value="ECO:0007669"/>
    <property type="project" value="Ensembl"/>
</dbReference>
<dbReference type="GO" id="GO:0005654">
    <property type="term" value="C:nucleoplasm"/>
    <property type="evidence" value="ECO:0000314"/>
    <property type="project" value="HPA"/>
</dbReference>
<dbReference type="GO" id="GO:0032991">
    <property type="term" value="C:protein-containing complex"/>
    <property type="evidence" value="ECO:0007669"/>
    <property type="project" value="Ensembl"/>
</dbReference>
<dbReference type="GO" id="GO:0045296">
    <property type="term" value="F:cadherin binding"/>
    <property type="evidence" value="ECO:0007005"/>
    <property type="project" value="BHF-UCL"/>
</dbReference>
<dbReference type="GO" id="GO:0042802">
    <property type="term" value="F:identical protein binding"/>
    <property type="evidence" value="ECO:0000353"/>
    <property type="project" value="IntAct"/>
</dbReference>
<dbReference type="GO" id="GO:0001784">
    <property type="term" value="F:phosphotyrosine residue binding"/>
    <property type="evidence" value="ECO:0000353"/>
    <property type="project" value="CAFA"/>
</dbReference>
<dbReference type="GO" id="GO:0030971">
    <property type="term" value="F:receptor tyrosine kinase binding"/>
    <property type="evidence" value="ECO:0000318"/>
    <property type="project" value="GO_Central"/>
</dbReference>
<dbReference type="GO" id="GO:0003723">
    <property type="term" value="F:RNA binding"/>
    <property type="evidence" value="ECO:0007005"/>
    <property type="project" value="UniProtKB"/>
</dbReference>
<dbReference type="GO" id="GO:0061629">
    <property type="term" value="F:RNA polymerase II-specific DNA-binding transcription factor binding"/>
    <property type="evidence" value="ECO:0000314"/>
    <property type="project" value="MGI"/>
</dbReference>
<dbReference type="GO" id="GO:0035591">
    <property type="term" value="F:signaling adaptor activity"/>
    <property type="evidence" value="ECO:0000318"/>
    <property type="project" value="GO_Central"/>
</dbReference>
<dbReference type="GO" id="GO:0095500">
    <property type="term" value="P:acetylcholine receptor signaling pathway"/>
    <property type="evidence" value="ECO:0007669"/>
    <property type="project" value="Ensembl"/>
</dbReference>
<dbReference type="GO" id="GO:0009952">
    <property type="term" value="P:anterior/posterior pattern specification"/>
    <property type="evidence" value="ECO:0007669"/>
    <property type="project" value="Ensembl"/>
</dbReference>
<dbReference type="GO" id="GO:0001783">
    <property type="term" value="P:B cell apoptotic process"/>
    <property type="evidence" value="ECO:0007669"/>
    <property type="project" value="Ensembl"/>
</dbReference>
<dbReference type="GO" id="GO:0001568">
    <property type="term" value="P:blood vessel development"/>
    <property type="evidence" value="ECO:0007669"/>
    <property type="project" value="Ensembl"/>
</dbReference>
<dbReference type="GO" id="GO:0060326">
    <property type="term" value="P:cell chemotaxis"/>
    <property type="evidence" value="ECO:0007669"/>
    <property type="project" value="Ensembl"/>
</dbReference>
<dbReference type="GO" id="GO:0016477">
    <property type="term" value="P:cell migration"/>
    <property type="evidence" value="ECO:0000318"/>
    <property type="project" value="GO_Central"/>
</dbReference>
<dbReference type="GO" id="GO:0098761">
    <property type="term" value="P:cellular response to interleukin-7"/>
    <property type="evidence" value="ECO:0007669"/>
    <property type="project" value="Ensembl"/>
</dbReference>
<dbReference type="GO" id="GO:0071560">
    <property type="term" value="P:cellular response to transforming growth factor beta stimulus"/>
    <property type="evidence" value="ECO:0000315"/>
    <property type="project" value="ARUK-UCL"/>
</dbReference>
<dbReference type="GO" id="GO:0071466">
    <property type="term" value="P:cellular response to xenobiotic stimulus"/>
    <property type="evidence" value="ECO:0007669"/>
    <property type="project" value="Ensembl"/>
</dbReference>
<dbReference type="GO" id="GO:0098749">
    <property type="term" value="P:cerebellar neuron development"/>
    <property type="evidence" value="ECO:0007669"/>
    <property type="project" value="Ensembl"/>
</dbReference>
<dbReference type="GO" id="GO:0021987">
    <property type="term" value="P:cerebral cortex development"/>
    <property type="evidence" value="ECO:0007669"/>
    <property type="project" value="Ensembl"/>
</dbReference>
<dbReference type="GO" id="GO:0160093">
    <property type="term" value="P:chordate pharynx development"/>
    <property type="evidence" value="ECO:0007669"/>
    <property type="project" value="Ensembl"/>
</dbReference>
<dbReference type="GO" id="GO:1904888">
    <property type="term" value="P:cranial skeletal system development"/>
    <property type="evidence" value="ECO:0007669"/>
    <property type="project" value="Ensembl"/>
</dbReference>
<dbReference type="GO" id="GO:0016358">
    <property type="term" value="P:dendrite development"/>
    <property type="evidence" value="ECO:0007669"/>
    <property type="project" value="Ensembl"/>
</dbReference>
<dbReference type="GO" id="GO:0086100">
    <property type="term" value="P:endothelin receptor signaling pathway"/>
    <property type="evidence" value="ECO:0007669"/>
    <property type="project" value="Ensembl"/>
</dbReference>
<dbReference type="GO" id="GO:0007167">
    <property type="term" value="P:enzyme-linked receptor protein signaling pathway"/>
    <property type="evidence" value="ECO:0000318"/>
    <property type="project" value="GO_Central"/>
</dbReference>
<dbReference type="GO" id="GO:0030010">
    <property type="term" value="P:establishment of cell polarity"/>
    <property type="evidence" value="ECO:0007669"/>
    <property type="project" value="Ensembl"/>
</dbReference>
<dbReference type="GO" id="GO:0008543">
    <property type="term" value="P:fibroblast growth factor receptor signaling pathway"/>
    <property type="evidence" value="ECO:0007669"/>
    <property type="project" value="Ensembl"/>
</dbReference>
<dbReference type="GO" id="GO:0035685">
    <property type="term" value="P:helper T cell diapedesis"/>
    <property type="evidence" value="ECO:0007669"/>
    <property type="project" value="Ensembl"/>
</dbReference>
<dbReference type="GO" id="GO:0021766">
    <property type="term" value="P:hippocampus development"/>
    <property type="evidence" value="ECO:0007669"/>
    <property type="project" value="Ensembl"/>
</dbReference>
<dbReference type="GO" id="GO:0035556">
    <property type="term" value="P:intracellular signal transduction"/>
    <property type="evidence" value="ECO:0000304"/>
    <property type="project" value="ProtInc"/>
</dbReference>
<dbReference type="GO" id="GO:0007254">
    <property type="term" value="P:JNK cascade"/>
    <property type="evidence" value="ECO:0000304"/>
    <property type="project" value="ProtInc"/>
</dbReference>
<dbReference type="GO" id="GO:0006629">
    <property type="term" value="P:lipid metabolic process"/>
    <property type="evidence" value="ECO:0007669"/>
    <property type="project" value="Ensembl"/>
</dbReference>
<dbReference type="GO" id="GO:0008584">
    <property type="term" value="P:male gonad development"/>
    <property type="evidence" value="ECO:0007669"/>
    <property type="project" value="Ensembl"/>
</dbReference>
<dbReference type="GO" id="GO:0010629">
    <property type="term" value="P:negative regulation of gene expression"/>
    <property type="evidence" value="ECO:0000315"/>
    <property type="project" value="ARUK-UCL"/>
</dbReference>
<dbReference type="GO" id="GO:0060392">
    <property type="term" value="P:negative regulation of SMAD protein signal transduction"/>
    <property type="evidence" value="ECO:0000315"/>
    <property type="project" value="ARUK-UCL"/>
</dbReference>
<dbReference type="GO" id="GO:0001764">
    <property type="term" value="P:neuron migration"/>
    <property type="evidence" value="ECO:0007669"/>
    <property type="project" value="Ensembl"/>
</dbReference>
<dbReference type="GO" id="GO:0003151">
    <property type="term" value="P:outflow tract morphogenesis"/>
    <property type="evidence" value="ECO:0007669"/>
    <property type="project" value="Ensembl"/>
</dbReference>
<dbReference type="GO" id="GO:0060017">
    <property type="term" value="P:parathyroid gland development"/>
    <property type="evidence" value="ECO:0007669"/>
    <property type="project" value="Ensembl"/>
</dbReference>
<dbReference type="GO" id="GO:0008284">
    <property type="term" value="P:positive regulation of cell population proliferation"/>
    <property type="evidence" value="ECO:0000315"/>
    <property type="project" value="CACAO"/>
</dbReference>
<dbReference type="GO" id="GO:0070374">
    <property type="term" value="P:positive regulation of ERK1 and ERK2 cascade"/>
    <property type="evidence" value="ECO:0000315"/>
    <property type="project" value="ARUK-UCL"/>
</dbReference>
<dbReference type="GO" id="GO:1903977">
    <property type="term" value="P:positive regulation of glial cell migration"/>
    <property type="evidence" value="ECO:0000315"/>
    <property type="project" value="ARUK-UCL"/>
</dbReference>
<dbReference type="GO" id="GO:0035022">
    <property type="term" value="P:positive regulation of Rac protein signal transduction"/>
    <property type="evidence" value="ECO:0007669"/>
    <property type="project" value="Ensembl"/>
</dbReference>
<dbReference type="GO" id="GO:1904395">
    <property type="term" value="P:positive regulation of skeletal muscle acetylcholine-gated channel clustering"/>
    <property type="evidence" value="ECO:0007669"/>
    <property type="project" value="Ensembl"/>
</dbReference>
<dbReference type="GO" id="GO:1900026">
    <property type="term" value="P:positive regulation of substrate adhesion-dependent cell spreading"/>
    <property type="evidence" value="ECO:0000315"/>
    <property type="project" value="UniProtKB"/>
</dbReference>
<dbReference type="GO" id="GO:0098698">
    <property type="term" value="P:postsynaptic specialization assembly"/>
    <property type="evidence" value="ECO:0007669"/>
    <property type="project" value="Ensembl"/>
</dbReference>
<dbReference type="GO" id="GO:0007265">
    <property type="term" value="P:Ras protein signal transduction"/>
    <property type="evidence" value="ECO:0000304"/>
    <property type="project" value="ProtInc"/>
</dbReference>
<dbReference type="GO" id="GO:0038026">
    <property type="term" value="P:reelin-mediated signaling pathway"/>
    <property type="evidence" value="ECO:0007669"/>
    <property type="project" value="Ensembl"/>
</dbReference>
<dbReference type="GO" id="GO:0033628">
    <property type="term" value="P:regulation of cell adhesion mediated by integrin"/>
    <property type="evidence" value="ECO:0007669"/>
    <property type="project" value="Ensembl"/>
</dbReference>
<dbReference type="GO" id="GO:0001558">
    <property type="term" value="P:regulation of cell growth"/>
    <property type="evidence" value="ECO:0007669"/>
    <property type="project" value="Ensembl"/>
</dbReference>
<dbReference type="GO" id="GO:0050773">
    <property type="term" value="P:regulation of dendrite development"/>
    <property type="evidence" value="ECO:0007669"/>
    <property type="project" value="Ensembl"/>
</dbReference>
<dbReference type="GO" id="GO:2000404">
    <property type="term" value="P:regulation of T cell migration"/>
    <property type="evidence" value="ECO:0007669"/>
    <property type="project" value="Ensembl"/>
</dbReference>
<dbReference type="GO" id="GO:0048384">
    <property type="term" value="P:retinoic acid receptor signaling pathway"/>
    <property type="evidence" value="ECO:0007669"/>
    <property type="project" value="Ensembl"/>
</dbReference>
<dbReference type="GO" id="GO:0007338">
    <property type="term" value="P:single fertilization"/>
    <property type="evidence" value="ECO:0007669"/>
    <property type="project" value="Ensembl"/>
</dbReference>
<dbReference type="GO" id="GO:0007283">
    <property type="term" value="P:spermatogenesis"/>
    <property type="evidence" value="ECO:0007669"/>
    <property type="project" value="Ensembl"/>
</dbReference>
<dbReference type="GO" id="GO:0050852">
    <property type="term" value="P:T cell receptor signaling pathway"/>
    <property type="evidence" value="ECO:0007669"/>
    <property type="project" value="Ensembl"/>
</dbReference>
<dbReference type="GO" id="GO:0048538">
    <property type="term" value="P:thymus development"/>
    <property type="evidence" value="ECO:0007669"/>
    <property type="project" value="Ensembl"/>
</dbReference>
<dbReference type="GO" id="GO:0001655">
    <property type="term" value="P:urogenital system development"/>
    <property type="evidence" value="ECO:0007669"/>
    <property type="project" value="Ensembl"/>
</dbReference>
<dbReference type="CDD" id="cd09926">
    <property type="entry name" value="SH2_CRK_like"/>
    <property type="match status" value="1"/>
</dbReference>
<dbReference type="CDD" id="cd11759">
    <property type="entry name" value="SH3_CRK_C"/>
    <property type="match status" value="1"/>
</dbReference>
<dbReference type="CDD" id="cd11758">
    <property type="entry name" value="SH3_CRK_N"/>
    <property type="match status" value="1"/>
</dbReference>
<dbReference type="FunFam" id="2.30.30.40:FF:000065">
    <property type="entry name" value="adapter molecule crk isoform X1"/>
    <property type="match status" value="1"/>
</dbReference>
<dbReference type="FunFam" id="3.30.505.10:FF:000026">
    <property type="entry name" value="adapter molecule crk isoform X1"/>
    <property type="match status" value="1"/>
</dbReference>
<dbReference type="FunFam" id="2.30.30.40:FF:000163">
    <property type="entry name" value="crk-like protein isoform X1"/>
    <property type="match status" value="1"/>
</dbReference>
<dbReference type="Gene3D" id="3.30.505.10">
    <property type="entry name" value="SH2 domain"/>
    <property type="match status" value="1"/>
</dbReference>
<dbReference type="Gene3D" id="2.30.30.40">
    <property type="entry name" value="SH3 Domains"/>
    <property type="match status" value="2"/>
</dbReference>
<dbReference type="InterPro" id="IPR035458">
    <property type="entry name" value="CRK_SH3_C"/>
</dbReference>
<dbReference type="InterPro" id="IPR035457">
    <property type="entry name" value="CRK_SH3_N"/>
</dbReference>
<dbReference type="InterPro" id="IPR000980">
    <property type="entry name" value="SH2"/>
</dbReference>
<dbReference type="InterPro" id="IPR036860">
    <property type="entry name" value="SH2_dom_sf"/>
</dbReference>
<dbReference type="InterPro" id="IPR036028">
    <property type="entry name" value="SH3-like_dom_sf"/>
</dbReference>
<dbReference type="InterPro" id="IPR001452">
    <property type="entry name" value="SH3_domain"/>
</dbReference>
<dbReference type="InterPro" id="IPR051184">
    <property type="entry name" value="Tyrosine-phos_adapter"/>
</dbReference>
<dbReference type="PANTHER" id="PTHR19969:SF5">
    <property type="entry name" value="CRK-LIKE PROTEIN"/>
    <property type="match status" value="1"/>
</dbReference>
<dbReference type="PANTHER" id="PTHR19969">
    <property type="entry name" value="SH2-SH3 ADAPTOR PROTEIN-RELATED"/>
    <property type="match status" value="1"/>
</dbReference>
<dbReference type="Pfam" id="PF00017">
    <property type="entry name" value="SH2"/>
    <property type="match status" value="1"/>
</dbReference>
<dbReference type="Pfam" id="PF00018">
    <property type="entry name" value="SH3_1"/>
    <property type="match status" value="1"/>
</dbReference>
<dbReference type="Pfam" id="PF07653">
    <property type="entry name" value="SH3_2"/>
    <property type="match status" value="1"/>
</dbReference>
<dbReference type="PRINTS" id="PR00401">
    <property type="entry name" value="SH2DOMAIN"/>
</dbReference>
<dbReference type="PRINTS" id="PR00452">
    <property type="entry name" value="SH3DOMAIN"/>
</dbReference>
<dbReference type="SMART" id="SM00252">
    <property type="entry name" value="SH2"/>
    <property type="match status" value="1"/>
</dbReference>
<dbReference type="SMART" id="SM00326">
    <property type="entry name" value="SH3"/>
    <property type="match status" value="2"/>
</dbReference>
<dbReference type="SUPFAM" id="SSF55550">
    <property type="entry name" value="SH2 domain"/>
    <property type="match status" value="1"/>
</dbReference>
<dbReference type="SUPFAM" id="SSF50044">
    <property type="entry name" value="SH3-domain"/>
    <property type="match status" value="2"/>
</dbReference>
<dbReference type="PROSITE" id="PS50001">
    <property type="entry name" value="SH2"/>
    <property type="match status" value="1"/>
</dbReference>
<dbReference type="PROSITE" id="PS50002">
    <property type="entry name" value="SH3"/>
    <property type="match status" value="2"/>
</dbReference>
<reference key="1">
    <citation type="journal article" date="1993" name="Oncogene">
        <title>Isolation and chromosomal localization of CRKL, a human crk-like gene.</title>
        <authorList>
            <person name="ten Hoeve J."/>
            <person name="Morris C."/>
            <person name="Heisterkamp N."/>
            <person name="Groffen J."/>
        </authorList>
    </citation>
    <scope>NUCLEOTIDE SEQUENCE [MRNA]</scope>
    <source>
        <tissue>Spleen</tissue>
    </source>
</reference>
<reference key="2">
    <citation type="journal article" date="2004" name="Genome Biol.">
        <title>A genome annotation-driven approach to cloning the human ORFeome.</title>
        <authorList>
            <person name="Collins J.E."/>
            <person name="Wright C.L."/>
            <person name="Edwards C.A."/>
            <person name="Davis M.P."/>
            <person name="Grinham J.A."/>
            <person name="Cole C.G."/>
            <person name="Goward M.E."/>
            <person name="Aguado B."/>
            <person name="Mallya M."/>
            <person name="Mokrab Y."/>
            <person name="Huckle E.J."/>
            <person name="Beare D.M."/>
            <person name="Dunham I."/>
        </authorList>
    </citation>
    <scope>NUCLEOTIDE SEQUENCE [LARGE SCALE MRNA]</scope>
</reference>
<reference key="3">
    <citation type="journal article" date="2004" name="Nat. Genet.">
        <title>Complete sequencing and characterization of 21,243 full-length human cDNAs.</title>
        <authorList>
            <person name="Ota T."/>
            <person name="Suzuki Y."/>
            <person name="Nishikawa T."/>
            <person name="Otsuki T."/>
            <person name="Sugiyama T."/>
            <person name="Irie R."/>
            <person name="Wakamatsu A."/>
            <person name="Hayashi K."/>
            <person name="Sato H."/>
            <person name="Nagai K."/>
            <person name="Kimura K."/>
            <person name="Makita H."/>
            <person name="Sekine M."/>
            <person name="Obayashi M."/>
            <person name="Nishi T."/>
            <person name="Shibahara T."/>
            <person name="Tanaka T."/>
            <person name="Ishii S."/>
            <person name="Yamamoto J."/>
            <person name="Saito K."/>
            <person name="Kawai Y."/>
            <person name="Isono Y."/>
            <person name="Nakamura Y."/>
            <person name="Nagahari K."/>
            <person name="Murakami K."/>
            <person name="Yasuda T."/>
            <person name="Iwayanagi T."/>
            <person name="Wagatsuma M."/>
            <person name="Shiratori A."/>
            <person name="Sudo H."/>
            <person name="Hosoiri T."/>
            <person name="Kaku Y."/>
            <person name="Kodaira H."/>
            <person name="Kondo H."/>
            <person name="Sugawara M."/>
            <person name="Takahashi M."/>
            <person name="Kanda K."/>
            <person name="Yokoi T."/>
            <person name="Furuya T."/>
            <person name="Kikkawa E."/>
            <person name="Omura Y."/>
            <person name="Abe K."/>
            <person name="Kamihara K."/>
            <person name="Katsuta N."/>
            <person name="Sato K."/>
            <person name="Tanikawa M."/>
            <person name="Yamazaki M."/>
            <person name="Ninomiya K."/>
            <person name="Ishibashi T."/>
            <person name="Yamashita H."/>
            <person name="Murakawa K."/>
            <person name="Fujimori K."/>
            <person name="Tanai H."/>
            <person name="Kimata M."/>
            <person name="Watanabe M."/>
            <person name="Hiraoka S."/>
            <person name="Chiba Y."/>
            <person name="Ishida S."/>
            <person name="Ono Y."/>
            <person name="Takiguchi S."/>
            <person name="Watanabe S."/>
            <person name="Yosida M."/>
            <person name="Hotuta T."/>
            <person name="Kusano J."/>
            <person name="Kanehori K."/>
            <person name="Takahashi-Fujii A."/>
            <person name="Hara H."/>
            <person name="Tanase T.-O."/>
            <person name="Nomura Y."/>
            <person name="Togiya S."/>
            <person name="Komai F."/>
            <person name="Hara R."/>
            <person name="Takeuchi K."/>
            <person name="Arita M."/>
            <person name="Imose N."/>
            <person name="Musashino K."/>
            <person name="Yuuki H."/>
            <person name="Oshima A."/>
            <person name="Sasaki N."/>
            <person name="Aotsuka S."/>
            <person name="Yoshikawa Y."/>
            <person name="Matsunawa H."/>
            <person name="Ichihara T."/>
            <person name="Shiohata N."/>
            <person name="Sano S."/>
            <person name="Moriya S."/>
            <person name="Momiyama H."/>
            <person name="Satoh N."/>
            <person name="Takami S."/>
            <person name="Terashima Y."/>
            <person name="Suzuki O."/>
            <person name="Nakagawa S."/>
            <person name="Senoh A."/>
            <person name="Mizoguchi H."/>
            <person name="Goto Y."/>
            <person name="Shimizu F."/>
            <person name="Wakebe H."/>
            <person name="Hishigaki H."/>
            <person name="Watanabe T."/>
            <person name="Sugiyama A."/>
            <person name="Takemoto M."/>
            <person name="Kawakami B."/>
            <person name="Yamazaki M."/>
            <person name="Watanabe K."/>
            <person name="Kumagai A."/>
            <person name="Itakura S."/>
            <person name="Fukuzumi Y."/>
            <person name="Fujimori Y."/>
            <person name="Komiyama M."/>
            <person name="Tashiro H."/>
            <person name="Tanigami A."/>
            <person name="Fujiwara T."/>
            <person name="Ono T."/>
            <person name="Yamada K."/>
            <person name="Fujii Y."/>
            <person name="Ozaki K."/>
            <person name="Hirao M."/>
            <person name="Ohmori Y."/>
            <person name="Kawabata A."/>
            <person name="Hikiji T."/>
            <person name="Kobatake N."/>
            <person name="Inagaki H."/>
            <person name="Ikema Y."/>
            <person name="Okamoto S."/>
            <person name="Okitani R."/>
            <person name="Kawakami T."/>
            <person name="Noguchi S."/>
            <person name="Itoh T."/>
            <person name="Shigeta K."/>
            <person name="Senba T."/>
            <person name="Matsumura K."/>
            <person name="Nakajima Y."/>
            <person name="Mizuno T."/>
            <person name="Morinaga M."/>
            <person name="Sasaki M."/>
            <person name="Togashi T."/>
            <person name="Oyama M."/>
            <person name="Hata H."/>
            <person name="Watanabe M."/>
            <person name="Komatsu T."/>
            <person name="Mizushima-Sugano J."/>
            <person name="Satoh T."/>
            <person name="Shirai Y."/>
            <person name="Takahashi Y."/>
            <person name="Nakagawa K."/>
            <person name="Okumura K."/>
            <person name="Nagase T."/>
            <person name="Nomura N."/>
            <person name="Kikuchi H."/>
            <person name="Masuho Y."/>
            <person name="Yamashita R."/>
            <person name="Nakai K."/>
            <person name="Yada T."/>
            <person name="Nakamura Y."/>
            <person name="Ohara O."/>
            <person name="Isogai T."/>
            <person name="Sugano S."/>
        </authorList>
    </citation>
    <scope>NUCLEOTIDE SEQUENCE [LARGE SCALE MRNA]</scope>
    <source>
        <tissue>Trachea</tissue>
    </source>
</reference>
<reference key="4">
    <citation type="submission" date="2005-09" db="EMBL/GenBank/DDBJ databases">
        <authorList>
            <person name="Mural R.J."/>
            <person name="Istrail S."/>
            <person name="Sutton G.G."/>
            <person name="Florea L."/>
            <person name="Halpern A.L."/>
            <person name="Mobarry C.M."/>
            <person name="Lippert R."/>
            <person name="Walenz B."/>
            <person name="Shatkay H."/>
            <person name="Dew I."/>
            <person name="Miller J.R."/>
            <person name="Flanigan M.J."/>
            <person name="Edwards N.J."/>
            <person name="Bolanos R."/>
            <person name="Fasulo D."/>
            <person name="Halldorsson B.V."/>
            <person name="Hannenhalli S."/>
            <person name="Turner R."/>
            <person name="Yooseph S."/>
            <person name="Lu F."/>
            <person name="Nusskern D.R."/>
            <person name="Shue B.C."/>
            <person name="Zheng X.H."/>
            <person name="Zhong F."/>
            <person name="Delcher A.L."/>
            <person name="Huson D.H."/>
            <person name="Kravitz S.A."/>
            <person name="Mouchard L."/>
            <person name="Reinert K."/>
            <person name="Remington K.A."/>
            <person name="Clark A.G."/>
            <person name="Waterman M.S."/>
            <person name="Eichler E.E."/>
            <person name="Adams M.D."/>
            <person name="Hunkapiller M.W."/>
            <person name="Myers E.W."/>
            <person name="Venter J.C."/>
        </authorList>
    </citation>
    <scope>NUCLEOTIDE SEQUENCE [LARGE SCALE GENOMIC DNA]</scope>
</reference>
<reference key="5">
    <citation type="journal article" date="2004" name="Genome Res.">
        <title>The status, quality, and expansion of the NIH full-length cDNA project: the Mammalian Gene Collection (MGC).</title>
        <authorList>
            <consortium name="The MGC Project Team"/>
        </authorList>
    </citation>
    <scope>NUCLEOTIDE SEQUENCE [LARGE SCALE MRNA]</scope>
    <source>
        <tissue>Skin</tissue>
    </source>
</reference>
<reference key="6">
    <citation type="journal article" date="1998" name="J. Biol. Chem.">
        <title>Interplay of the proto-oncogene proteins CrkL and CrkII in insulin-like growth factor-I receptor-mediated signal transduction.</title>
        <authorList>
            <person name="Koval A.P."/>
            <person name="Karas M."/>
            <person name="Zick Y."/>
            <person name="LeRoith D."/>
        </authorList>
    </citation>
    <scope>INTERACTION WITH IRS4</scope>
</reference>
<reference key="7">
    <citation type="journal article" date="1997" name="J. Biol. Chem.">
        <title>Involvement of p130(Cas) and p105(HEF1), a novel Cas-like docking protein, in a cytoskeleton-dependent signaling pathway initiated by ligation of integrin or antigen receptor on human B cells.</title>
        <authorList>
            <person name="Manie S.N."/>
            <person name="Beck A.R.P."/>
            <person name="Astier A."/>
            <person name="Law S.F."/>
            <person name="Canty T."/>
            <person name="Hirai H."/>
            <person name="Druker B.J."/>
            <person name="Avraham H."/>
            <person name="Haghayeghi N."/>
            <person name="Sattler M."/>
            <person name="Salgia R."/>
            <person name="Griffin J.D."/>
            <person name="Golemis E.A."/>
            <person name="Freedman A.S."/>
        </authorList>
    </citation>
    <scope>INTERACTION WITH NEDD9 AND BCAR1</scope>
</reference>
<reference key="8">
    <citation type="journal article" date="1999" name="Oncogene">
        <title>Tyrosine phosphorylation and complex formation of Cbl-b upon T cell receptor stimulation.</title>
        <authorList>
            <person name="Elly C."/>
            <person name="Witte S."/>
            <person name="Zhang Z."/>
            <person name="Rosnet O."/>
            <person name="Lipkowitz S."/>
            <person name="Altman A."/>
            <person name="Liu Y.-C."/>
        </authorList>
    </citation>
    <scope>INTERACTION WITH CBLB</scope>
</reference>
<reference key="9">
    <citation type="journal article" date="2002" name="Blood">
        <title>DOCK2 associates with CrkL and regulates Rac1 in human leukemia cell lines.</title>
        <authorList>
            <person name="Nishihara H."/>
            <person name="Maeda M."/>
            <person name="Oda A."/>
            <person name="Tsuda M."/>
            <person name="Sawa H."/>
            <person name="Nagashima K."/>
            <person name="Tanaka S."/>
        </authorList>
    </citation>
    <scope>INTERACTION WITH DOCK2</scope>
</reference>
<reference key="10">
    <citation type="journal article" date="2001" name="J. Biol. Chem.">
        <title>CrkL is recruited through its SH2 domain to the erythropoietin receptor and plays a role in Lyn-mediated receptor signaling.</title>
        <authorList>
            <person name="Arai A."/>
            <person name="Kanda E."/>
            <person name="Nosaka Y."/>
            <person name="Miyasaka N."/>
            <person name="Miura O."/>
        </authorList>
    </citation>
    <scope>INTERACTION WITH EPOR AND INPP5D</scope>
</reference>
<reference key="11">
    <citation type="journal article" date="2005" name="Nat. Biotechnol.">
        <title>Immunoaffinity profiling of tyrosine phosphorylation in cancer cells.</title>
        <authorList>
            <person name="Rush J."/>
            <person name="Moritz A."/>
            <person name="Lee K.A."/>
            <person name="Guo A."/>
            <person name="Goss V.L."/>
            <person name="Spek E.J."/>
            <person name="Zhang H."/>
            <person name="Zha X.-M."/>
            <person name="Polakiewicz R.D."/>
            <person name="Comb M.J."/>
        </authorList>
    </citation>
    <scope>PHOSPHORYLATION [LARGE SCALE ANALYSIS] AT TYR-207</scope>
    <scope>IDENTIFICATION BY MASS SPECTROMETRY [LARGE SCALE ANALYSIS]</scope>
</reference>
<reference key="12">
    <citation type="journal article" date="2008" name="Proc. Natl. Acad. Sci. U.S.A.">
        <title>A quantitative atlas of mitotic phosphorylation.</title>
        <authorList>
            <person name="Dephoure N."/>
            <person name="Zhou C."/>
            <person name="Villen J."/>
            <person name="Beausoleil S.A."/>
            <person name="Bakalarski C.E."/>
            <person name="Elledge S.J."/>
            <person name="Gygi S.P."/>
        </authorList>
    </citation>
    <scope>IDENTIFICATION BY MASS SPECTROMETRY [LARGE SCALE ANALYSIS]</scope>
    <source>
        <tissue>Cervix carcinoma</tissue>
    </source>
</reference>
<reference key="13">
    <citation type="journal article" date="2009" name="J. Biol. Chem.">
        <title>DOCK5 and DOCK1 regulate Caco-2 intestinal epithelial cell spreading and migration on collagen IV.</title>
        <authorList>
            <person name="Sanders M.A."/>
            <person name="Ampasala D."/>
            <person name="Basson M.D."/>
        </authorList>
    </citation>
    <scope>INTERACTION WITH DOCK5</scope>
    <scope>MUTAGENESIS OF TRP-160</scope>
</reference>
<reference key="14">
    <citation type="journal article" date="2009" name="Sci. Signal.">
        <title>Quantitative phosphoproteomic analysis of T cell receptor signaling reveals system-wide modulation of protein-protein interactions.</title>
        <authorList>
            <person name="Mayya V."/>
            <person name="Lundgren D.H."/>
            <person name="Hwang S.-I."/>
            <person name="Rezaul K."/>
            <person name="Wu L."/>
            <person name="Eng J.K."/>
            <person name="Rodionov V."/>
            <person name="Han D.K."/>
        </authorList>
    </citation>
    <scope>PHOSPHORYLATION [LARGE SCALE ANALYSIS] AT TYR-127</scope>
    <scope>IDENTIFICATION BY MASS SPECTROMETRY [LARGE SCALE ANALYSIS]</scope>
    <source>
        <tissue>Leukemic T-cell</tissue>
    </source>
</reference>
<reference key="15">
    <citation type="journal article" date="2011" name="BMC Syst. Biol.">
        <title>Initial characterization of the human central proteome.</title>
        <authorList>
            <person name="Burkard T.R."/>
            <person name="Planyavsky M."/>
            <person name="Kaupe I."/>
            <person name="Breitwieser F.P."/>
            <person name="Buerckstuemmer T."/>
            <person name="Bennett K.L."/>
            <person name="Superti-Furga G."/>
            <person name="Colinge J."/>
        </authorList>
    </citation>
    <scope>IDENTIFICATION BY MASS SPECTROMETRY [LARGE SCALE ANALYSIS]</scope>
</reference>
<reference key="16">
    <citation type="journal article" date="2013" name="J. Proteome Res.">
        <title>Toward a comprehensive characterization of a human cancer cell phosphoproteome.</title>
        <authorList>
            <person name="Zhou H."/>
            <person name="Di Palma S."/>
            <person name="Preisinger C."/>
            <person name="Peng M."/>
            <person name="Polat A.N."/>
            <person name="Heck A.J."/>
            <person name="Mohammed S."/>
        </authorList>
    </citation>
    <scope>IDENTIFICATION BY MASS SPECTROMETRY [LARGE SCALE ANALYSIS]</scope>
    <source>
        <tissue>Erythroleukemia</tissue>
    </source>
</reference>
<reference key="17">
    <citation type="journal article" date="2014" name="J. Proteomics">
        <title>An enzyme assisted RP-RPLC approach for in-depth analysis of human liver phosphoproteome.</title>
        <authorList>
            <person name="Bian Y."/>
            <person name="Song C."/>
            <person name="Cheng K."/>
            <person name="Dong M."/>
            <person name="Wang F."/>
            <person name="Huang J."/>
            <person name="Sun D."/>
            <person name="Wang L."/>
            <person name="Ye M."/>
            <person name="Zou H."/>
        </authorList>
    </citation>
    <scope>IDENTIFICATION BY MASS SPECTROMETRY [LARGE SCALE ANALYSIS]</scope>
    <source>
        <tissue>Liver</tissue>
    </source>
</reference>
<reference key="18">
    <citation type="submission" date="2006-12" db="PDB data bank">
        <title>Solution structures of the SH3 domain of human CRK-like protein.</title>
        <authorList>
            <consortium name="RIKEN structural genomics initiative (RSGI)"/>
        </authorList>
    </citation>
    <scope>STRUCTURE BY NMR OF 220-303</scope>
</reference>
<evidence type="ECO:0000255" key="1">
    <source>
        <dbReference type="PROSITE-ProRule" id="PRU00191"/>
    </source>
</evidence>
<evidence type="ECO:0000255" key="2">
    <source>
        <dbReference type="PROSITE-ProRule" id="PRU00192"/>
    </source>
</evidence>
<evidence type="ECO:0000256" key="3">
    <source>
        <dbReference type="SAM" id="MobiDB-lite"/>
    </source>
</evidence>
<evidence type="ECO:0000269" key="4">
    <source>
    </source>
</evidence>
<evidence type="ECO:0000269" key="5">
    <source>
    </source>
</evidence>
<evidence type="ECO:0000269" key="6">
    <source>
    </source>
</evidence>
<evidence type="ECO:0000269" key="7">
    <source>
    </source>
</evidence>
<evidence type="ECO:0000269" key="8">
    <source>
    </source>
</evidence>
<evidence type="ECO:0000269" key="9">
    <source>
    </source>
</evidence>
<evidence type="ECO:0000305" key="10"/>
<evidence type="ECO:0007744" key="11">
    <source>
    </source>
</evidence>
<evidence type="ECO:0007744" key="12">
    <source>
    </source>
</evidence>
<evidence type="ECO:0007829" key="13">
    <source>
        <dbReference type="PDB" id="2BZY"/>
    </source>
</evidence>
<evidence type="ECO:0007829" key="14">
    <source>
        <dbReference type="PDB" id="2DBK"/>
    </source>
</evidence>
<evidence type="ECO:0007829" key="15">
    <source>
        <dbReference type="PDB" id="2EO3"/>
    </source>
</evidence>
<evidence type="ECO:0007829" key="16">
    <source>
        <dbReference type="PDB" id="2LQN"/>
    </source>
</evidence>
<evidence type="ECO:0007829" key="17">
    <source>
        <dbReference type="PDB" id="2LQW"/>
    </source>
</evidence>
<accession>P46109</accession>
<accession>A8KA44</accession>
<accession>D3DX35</accession>
<organism>
    <name type="scientific">Homo sapiens</name>
    <name type="common">Human</name>
    <dbReference type="NCBI Taxonomy" id="9606"/>
    <lineage>
        <taxon>Eukaryota</taxon>
        <taxon>Metazoa</taxon>
        <taxon>Chordata</taxon>
        <taxon>Craniata</taxon>
        <taxon>Vertebrata</taxon>
        <taxon>Euteleostomi</taxon>
        <taxon>Mammalia</taxon>
        <taxon>Eutheria</taxon>
        <taxon>Euarchontoglires</taxon>
        <taxon>Primates</taxon>
        <taxon>Haplorrhini</taxon>
        <taxon>Catarrhini</taxon>
        <taxon>Hominidae</taxon>
        <taxon>Homo</taxon>
    </lineage>
</organism>
<comment type="function">
    <text>May mediate the transduction of intracellular signals.</text>
</comment>
<comment type="subunit">
    <text evidence="4 5 6 7 8 9">Interacts with tyrosine-phosphorylated EPOR and INPP5D/SHIP1 (PubMed:11443118). Interacts with DOCK2 and DOCK5 via its first SH3 domain (PubMed:12393632, PubMed:19004829). Interacts with phosphorylated CBLB and IRS4 (PubMed:10022120, PubMed:9614078). Interacts with BCAR1/CAS and NEDD9/HEF1 (PubMed:9020138).</text>
</comment>
<comment type="interaction">
    <interactant intactId="EBI-910">
        <id>P46109</id>
    </interactant>
    <interactant intactId="EBI-375543">
        <id>P00519</id>
        <label>ABL1</label>
    </interactant>
    <organismsDiffer>false</organismsDiffer>
    <experiments>4</experiments>
</comment>
<comment type="interaction">
    <interactant intactId="EBI-910">
        <id>P46109</id>
    </interactant>
    <interactant intactId="EBI-2105445">
        <id>P51451</id>
        <label>BLK</label>
    </interactant>
    <organismsDiffer>false</organismsDiffer>
    <experiments>3</experiments>
</comment>
<comment type="interaction">
    <interactant intactId="EBI-910">
        <id>P46109</id>
    </interactant>
    <interactant intactId="EBI-518228">
        <id>P22681</id>
        <label>CBL</label>
    </interactant>
    <organismsDiffer>false</organismsDiffer>
    <experiments>4</experiments>
</comment>
<comment type="interaction">
    <interactant intactId="EBI-910">
        <id>P46109</id>
    </interactant>
    <interactant intactId="EBI-744027">
        <id>Q13191</id>
        <label>CBLB</label>
    </interactant>
    <organismsDiffer>false</organismsDiffer>
    <experiments>4</experiments>
</comment>
<comment type="interaction">
    <interactant intactId="EBI-910">
        <id>P46109</id>
    </interactant>
    <interactant intactId="EBI-910">
        <id>P46109</id>
        <label>CRKL</label>
    </interactant>
    <organismsDiffer>false</organismsDiffer>
    <experiments>4</experiments>
</comment>
<comment type="interaction">
    <interactant intactId="EBI-910">
        <id>P46109</id>
    </interactant>
    <interactant intactId="EBI-8536103">
        <id>Q96PD2</id>
        <label>DCBLD2</label>
    </interactant>
    <organismsDiffer>false</organismsDiffer>
    <experiments>3</experiments>
</comment>
<comment type="interaction">
    <interactant intactId="EBI-910">
        <id>P46109</id>
    </interactant>
    <interactant intactId="EBI-297353">
        <id>P00533</id>
        <label>EGFR</label>
    </interactant>
    <organismsDiffer>false</organismsDiffer>
    <experiments>4</experiments>
</comment>
<comment type="interaction">
    <interactant intactId="EBI-910">
        <id>P46109</id>
    </interactant>
    <interactant intactId="EBI-641062">
        <id>P04626</id>
        <label>ERBB2</label>
    </interactant>
    <organismsDiffer>false</organismsDiffer>
    <experiments>2</experiments>
</comment>
<comment type="interaction">
    <interactant intactId="EBI-910">
        <id>P46109</id>
    </interactant>
    <interactant intactId="EBI-720706">
        <id>P21860</id>
        <label>ERBB3</label>
    </interactant>
    <organismsDiffer>false</organismsDiffer>
    <experiments>3</experiments>
</comment>
<comment type="interaction">
    <interactant intactId="EBI-910">
        <id>P46109</id>
    </interactant>
    <interactant intactId="EBI-1026718">
        <id>P17948</id>
        <label>FLT1</label>
    </interactant>
    <organismsDiffer>false</organismsDiffer>
    <experiments>9</experiments>
</comment>
<comment type="interaction">
    <interactant intactId="EBI-910">
        <id>P46109</id>
    </interactant>
    <interactant intactId="EBI-3946257">
        <id>P36888</id>
        <label>FLT3</label>
    </interactant>
    <organismsDiffer>false</organismsDiffer>
    <experiments>2</experiments>
</comment>
<comment type="interaction">
    <interactant intactId="EBI-910">
        <id>P46109</id>
    </interactant>
    <interactant intactId="EBI-517684">
        <id>Q13480</id>
        <label>GAB1</label>
    </interactant>
    <organismsDiffer>false</organismsDiffer>
    <experiments>5</experiments>
</comment>
<comment type="interaction">
    <interactant intactId="EBI-910">
        <id>P46109</id>
    </interactant>
    <interactant intactId="EBI-703066">
        <id>P05556</id>
        <label>ITGB1</label>
    </interactant>
    <organismsDiffer>false</organismsDiffer>
    <experiments>2</experiments>
</comment>
<comment type="interaction">
    <interactant intactId="EBI-910">
        <id>P46109</id>
    </interactant>
    <interactant intactId="EBI-881">
        <id>Q92918</id>
        <label>MAP4K1</label>
    </interactant>
    <organismsDiffer>false</organismsDiffer>
    <experiments>5</experiments>
</comment>
<comment type="interaction">
    <interactant intactId="EBI-910">
        <id>P46109</id>
    </interactant>
    <interactant intactId="EBI-2861522">
        <id>P16234</id>
        <label>PDGFRA</label>
    </interactant>
    <organismsDiffer>false</organismsDiffer>
    <experiments>3</experiments>
</comment>
<comment type="interaction">
    <interactant intactId="EBI-910">
        <id>P46109</id>
    </interactant>
    <interactant intactId="EBI-357669">
        <id>P62333</id>
        <label>PSMC6</label>
    </interactant>
    <organismsDiffer>false</organismsDiffer>
    <experiments>5</experiments>
</comment>
<comment type="interaction">
    <interactant intactId="EBI-910">
        <id>P46109</id>
    </interactant>
    <interactant intactId="EBI-11603375">
        <id>A2A3K4</id>
        <label>PTPDC1</label>
    </interactant>
    <organismsDiffer>false</organismsDiffer>
    <experiments>3</experiments>
</comment>
<comment type="interaction">
    <interactant intactId="EBI-910">
        <id>P46109</id>
    </interactant>
    <interactant intactId="EBI-976876">
        <id>Q13905</id>
        <label>RAPGEF1</label>
    </interactant>
    <organismsDiffer>false</organismsDiffer>
    <experiments>4</experiments>
</comment>
<comment type="interaction">
    <interactant intactId="EBI-910">
        <id>P46109</id>
    </interactant>
    <interactant intactId="EBI-742050">
        <id>Q70EK8</id>
        <label>USP53</label>
    </interactant>
    <organismsDiffer>false</organismsDiffer>
    <experiments>5</experiments>
</comment>
<comment type="interaction">
    <interactant intactId="EBI-910">
        <id>P46109</id>
    </interactant>
    <interactant intactId="EBI-515331">
        <id>P07947</id>
        <label>YES1</label>
    </interactant>
    <organismsDiffer>false</organismsDiffer>
    <experiments>3</experiments>
</comment>
<comment type="interaction">
    <interactant intactId="EBI-910">
        <id>P46109</id>
    </interactant>
    <interactant intactId="EBI-1633915">
        <id>Q08460</id>
        <label>Kcnma1</label>
    </interactant>
    <organismsDiffer>true</organismsDiffer>
    <experiments>5</experiments>
</comment>
<comment type="interaction">
    <interactant intactId="EBI-910">
        <id>P46109</id>
    </interactant>
    <interactant intactId="EBI-976654">
        <id>Q9EQG6</id>
        <label>Kidins220</label>
    </interactant>
    <organismsDiffer>true</organismsDiffer>
    <experiments>2</experiments>
</comment>
<comment type="similarity">
    <text evidence="10">Belongs to the CRK family.</text>
</comment>
<feature type="chain" id="PRO_0000079347" description="Crk-like protein">
    <location>
        <begin position="1"/>
        <end position="303"/>
    </location>
</feature>
<feature type="domain" description="SH2" evidence="1">
    <location>
        <begin position="14"/>
        <end position="102"/>
    </location>
</feature>
<feature type="domain" description="SH3 1" evidence="2">
    <location>
        <begin position="123"/>
        <end position="183"/>
    </location>
</feature>
<feature type="domain" description="SH3 2" evidence="2">
    <location>
        <begin position="235"/>
        <end position="296"/>
    </location>
</feature>
<feature type="region of interest" description="Disordered" evidence="3">
    <location>
        <begin position="184"/>
        <end position="234"/>
    </location>
</feature>
<feature type="modified residue" description="Phosphotyrosine" evidence="12">
    <location>
        <position position="127"/>
    </location>
</feature>
<feature type="modified residue" description="Phosphotyrosine" evidence="11">
    <location>
        <position position="207"/>
    </location>
</feature>
<feature type="mutagenesis site" description="Abolishes interaction with DOCK5." evidence="7">
    <original>W</original>
    <variation>L</variation>
    <location>
        <position position="160"/>
    </location>
</feature>
<feature type="helix" evidence="15">
    <location>
        <begin position="11"/>
        <end position="14"/>
    </location>
</feature>
<feature type="strand" evidence="15">
    <location>
        <begin position="15"/>
        <end position="18"/>
    </location>
</feature>
<feature type="helix" evidence="15">
    <location>
        <begin position="21"/>
        <end position="28"/>
    </location>
</feature>
<feature type="strand" evidence="17">
    <location>
        <begin position="29"/>
        <end position="31"/>
    </location>
</feature>
<feature type="strand" evidence="15">
    <location>
        <begin position="36"/>
        <end position="40"/>
    </location>
</feature>
<feature type="strand" evidence="15">
    <location>
        <begin position="42"/>
        <end position="46"/>
    </location>
</feature>
<feature type="strand" evidence="15">
    <location>
        <begin position="48"/>
        <end position="54"/>
    </location>
</feature>
<feature type="strand" evidence="15">
    <location>
        <begin position="57"/>
        <end position="66"/>
    </location>
</feature>
<feature type="turn" evidence="15">
    <location>
        <begin position="67"/>
        <end position="69"/>
    </location>
</feature>
<feature type="strand" evidence="15">
    <location>
        <begin position="70"/>
        <end position="73"/>
    </location>
</feature>
<feature type="strand" evidence="15">
    <location>
        <begin position="78"/>
        <end position="80"/>
    </location>
</feature>
<feature type="helix" evidence="15">
    <location>
        <begin position="81"/>
        <end position="88"/>
    </location>
</feature>
<feature type="strand" evidence="15">
    <location>
        <begin position="93"/>
        <end position="96"/>
    </location>
</feature>
<feature type="strand" evidence="17">
    <location>
        <begin position="105"/>
        <end position="107"/>
    </location>
</feature>
<feature type="strand" evidence="16">
    <location>
        <begin position="119"/>
        <end position="132"/>
    </location>
</feature>
<feature type="strand" evidence="16">
    <location>
        <begin position="138"/>
        <end position="141"/>
    </location>
</feature>
<feature type="strand" evidence="16">
    <location>
        <begin position="146"/>
        <end position="154"/>
    </location>
</feature>
<feature type="strand" evidence="16">
    <location>
        <begin position="157"/>
        <end position="164"/>
    </location>
</feature>
<feature type="strand" evidence="16">
    <location>
        <begin position="170"/>
        <end position="174"/>
    </location>
</feature>
<feature type="helix" evidence="16">
    <location>
        <begin position="175"/>
        <end position="177"/>
    </location>
</feature>
<feature type="strand" evidence="16">
    <location>
        <begin position="178"/>
        <end position="182"/>
    </location>
</feature>
<feature type="helix" evidence="17">
    <location>
        <begin position="190"/>
        <end position="192"/>
    </location>
</feature>
<feature type="helix" evidence="16">
    <location>
        <begin position="203"/>
        <end position="205"/>
    </location>
</feature>
<feature type="strand" evidence="13">
    <location>
        <begin position="238"/>
        <end position="242"/>
    </location>
</feature>
<feature type="strand" evidence="13">
    <location>
        <begin position="248"/>
        <end position="251"/>
    </location>
</feature>
<feature type="strand" evidence="14">
    <location>
        <begin position="253"/>
        <end position="255"/>
    </location>
</feature>
<feature type="strand" evidence="13">
    <location>
        <begin position="263"/>
        <end position="269"/>
    </location>
</feature>
<feature type="strand" evidence="13">
    <location>
        <begin position="271"/>
        <end position="279"/>
    </location>
</feature>
<feature type="strand" evidence="13">
    <location>
        <begin position="282"/>
        <end position="287"/>
    </location>
</feature>
<feature type="helix" evidence="13">
    <location>
        <begin position="288"/>
        <end position="290"/>
    </location>
</feature>
<feature type="strand" evidence="13">
    <location>
        <begin position="291"/>
        <end position="293"/>
    </location>
</feature>
<feature type="strand" evidence="16">
    <location>
        <begin position="296"/>
        <end position="299"/>
    </location>
</feature>
<gene>
    <name type="primary">CRKL</name>
</gene>